<evidence type="ECO:0000250" key="1"/>
<evidence type="ECO:0000255" key="2"/>
<evidence type="ECO:0000255" key="3">
    <source>
        <dbReference type="PROSITE-ProRule" id="PRU00283"/>
    </source>
</evidence>
<evidence type="ECO:0000256" key="4">
    <source>
        <dbReference type="SAM" id="MobiDB-lite"/>
    </source>
</evidence>
<evidence type="ECO:0000305" key="5"/>
<proteinExistence type="inferred from homology"/>
<accession>Q292S8</accession>
<organism>
    <name type="scientific">Drosophila pseudoobscura pseudoobscura</name>
    <name type="common">Fruit fly</name>
    <dbReference type="NCBI Taxonomy" id="46245"/>
    <lineage>
        <taxon>Eukaryota</taxon>
        <taxon>Metazoa</taxon>
        <taxon>Ecdysozoa</taxon>
        <taxon>Arthropoda</taxon>
        <taxon>Hexapoda</taxon>
        <taxon>Insecta</taxon>
        <taxon>Pterygota</taxon>
        <taxon>Neoptera</taxon>
        <taxon>Endopterygota</taxon>
        <taxon>Diptera</taxon>
        <taxon>Brachycera</taxon>
        <taxon>Muscomorpha</taxon>
        <taxon>Ephydroidea</taxon>
        <taxon>Drosophilidae</taxon>
        <taxon>Drosophila</taxon>
        <taxon>Sophophora</taxon>
    </lineage>
</organism>
<name>COS_DROPS</name>
<sequence length="1223" mass="135215">MEIPIQVAVRICPYTEPSENRKPVAGAEADASAFGNAEAKAESFSDSEDNKNDASNRQRPEESTDANGNSEGGRQLKKETLPTDSNGNENGTIVPLGSGCCVQAIPISASALGLPSALPGGRAQDSIAAGLIQVGAHTVPVTHALGSGTTQSQLYYQTVFPLISLFLEGFDASVVTYGQRGQGKTYTLYGPGFECVYGEADQGVVQRCVRDIFAHIAGHSERTYAVNVGFVEICEGEVCDLLDMGNVHCQSVEEVFRWLQIGLATRQPKSAHSLFTLTLEQQWVSKEGLIQHRLSTASFSDLCATERWGEPPPGNPRDAGLQMLELVVNTLTDPSIMYGVNGNIPYGQTTLTTLLKDSFGGRAQTLVILCVSPQEQHVAETLGNLQFAFKVQCVRNYVIMNTYSDDNTPISPETMPNGSSNPGAGPLAQVAAGDNFGLQFAASQWFKLVSNAEGLFAKLMASNLISELEKEQIEEWLFLKQECEECLSSTEAMRSQKQLVPIQEAEEPEESVSEPPNSDNDTDNESQRPDLADKLESLMEEFRAKTDALIQSKHAEFLTKHPKAVMQSQERDKESKLDAPPEKDKEKIEERKTSIAGRRRSIQPGASLSTAELALLNRVALQQPTAQPPPSVLDPESSIDPLESSAGEGLRQAAIAAAAANAPIEQLQKKLRKLHAEIEGRQRQLKEIEQTMQVKQNIISELVKNSDTRSHAKQRFQKKKAKLEAECDKAKKHLAKALIQGREKGETERWSAIIAHIEHRLEDLSSMKHIAGESGQKLKKLQQSMAESRKQQEELEKKIRKESKLRDQLETELAKLKESRDGASGGKELVKLDSPEQQGRQLKAVQARITHLNHILREKSDNLEECAGGEGPAPAQQESLRHEIRNLRGTRDLLLDERCHLDRKLKRDKMLTQREERKLLECDEAIEAIDAAIEFKNELICGHKSIDTSDRLQREKGEQMLMARLNKLSPEEMRTLLYKYFNKVIDLRDSSRKLELQLVQLERERDAWEWKERVLSNAVRQARLEGERNAVLLQRQHEMKLTLMLRHLAEETSASSASYGERALAPGHQTSSGDFDYELDFYKAAATTTTTTNHKALVKPPKSTPSGAALEKYKDKEQRGAGRNIFAKFQVLTRYASSAASAAAAGSCSSTVDESTALIESTTTATATTTTTTTTTTTGGKGKERGLPNIRQDQLKRLMPAPTVTKVTRQKNKIIIQDASRRN</sequence>
<reference key="1">
    <citation type="journal article" date="2005" name="Genome Res.">
        <title>Comparative genome sequencing of Drosophila pseudoobscura: chromosomal, gene, and cis-element evolution.</title>
        <authorList>
            <person name="Richards S."/>
            <person name="Liu Y."/>
            <person name="Bettencourt B.R."/>
            <person name="Hradecky P."/>
            <person name="Letovsky S."/>
            <person name="Nielsen R."/>
            <person name="Thornton K."/>
            <person name="Hubisz M.J."/>
            <person name="Chen R."/>
            <person name="Meisel R.P."/>
            <person name="Couronne O."/>
            <person name="Hua S."/>
            <person name="Smith M.A."/>
            <person name="Zhang P."/>
            <person name="Liu J."/>
            <person name="Bussemaker H.J."/>
            <person name="van Batenburg M.F."/>
            <person name="Howells S.L."/>
            <person name="Scherer S.E."/>
            <person name="Sodergren E."/>
            <person name="Matthews B.B."/>
            <person name="Crosby M.A."/>
            <person name="Schroeder A.J."/>
            <person name="Ortiz-Barrientos D."/>
            <person name="Rives C.M."/>
            <person name="Metzker M.L."/>
            <person name="Muzny D.M."/>
            <person name="Scott G."/>
            <person name="Steffen D."/>
            <person name="Wheeler D.A."/>
            <person name="Worley K.C."/>
            <person name="Havlak P."/>
            <person name="Durbin K.J."/>
            <person name="Egan A."/>
            <person name="Gill R."/>
            <person name="Hume J."/>
            <person name="Morgan M.B."/>
            <person name="Miner G."/>
            <person name="Hamilton C."/>
            <person name="Huang Y."/>
            <person name="Waldron L."/>
            <person name="Verduzco D."/>
            <person name="Clerc-Blankenburg K.P."/>
            <person name="Dubchak I."/>
            <person name="Noor M.A.F."/>
            <person name="Anderson W."/>
            <person name="White K.P."/>
            <person name="Clark A.G."/>
            <person name="Schaeffer S.W."/>
            <person name="Gelbart W.M."/>
            <person name="Weinstock G.M."/>
            <person name="Gibbs R.A."/>
        </authorList>
    </citation>
    <scope>NUCLEOTIDE SEQUENCE [LARGE SCALE GENOMIC DNA]</scope>
    <source>
        <strain>MV2-25 / Tucson 14011-0121.94</strain>
    </source>
</reference>
<gene>
    <name type="primary">cos</name>
    <name type="synonym">costal-2</name>
    <name type="ORF">GA14314</name>
</gene>
<protein>
    <recommendedName>
        <fullName>Kinesin-like protein costa</fullName>
    </recommendedName>
    <alternativeName>
        <fullName>Kinesin-like protein costal2</fullName>
    </alternativeName>
</protein>
<feature type="chain" id="PRO_0000307149" description="Kinesin-like protein costa">
    <location>
        <begin position="1"/>
        <end position="1223"/>
    </location>
</feature>
<feature type="domain" description="Kinesin motor" evidence="3">
    <location>
        <begin position="4"/>
        <end position="394"/>
    </location>
</feature>
<feature type="region of interest" description="Disordered" evidence="4">
    <location>
        <begin position="13"/>
        <end position="90"/>
    </location>
</feature>
<feature type="region of interest" description="Disordered" evidence="4">
    <location>
        <begin position="494"/>
        <end position="528"/>
    </location>
</feature>
<feature type="region of interest" description="Disordered" evidence="4">
    <location>
        <begin position="560"/>
        <end position="604"/>
    </location>
</feature>
<feature type="region of interest" description="Disordered" evidence="4">
    <location>
        <begin position="625"/>
        <end position="646"/>
    </location>
</feature>
<feature type="region of interest" description="Disordered" evidence="4">
    <location>
        <begin position="774"/>
        <end position="799"/>
    </location>
</feature>
<feature type="region of interest" description="Disordered" evidence="4">
    <location>
        <begin position="1162"/>
        <end position="1188"/>
    </location>
</feature>
<feature type="coiled-coil region" evidence="2">
    <location>
        <begin position="658"/>
        <end position="743"/>
    </location>
</feature>
<feature type="coiled-coil region" evidence="2">
    <location>
        <begin position="773"/>
        <end position="825"/>
    </location>
</feature>
<feature type="coiled-coil region" evidence="2">
    <location>
        <begin position="982"/>
        <end position="1015"/>
    </location>
</feature>
<feature type="compositionally biased region" description="Basic and acidic residues" evidence="4">
    <location>
        <begin position="39"/>
        <end position="62"/>
    </location>
</feature>
<feature type="compositionally biased region" description="Basic and acidic residues" evidence="4">
    <location>
        <begin position="569"/>
        <end position="593"/>
    </location>
</feature>
<feature type="compositionally biased region" description="Basic and acidic residues" evidence="4">
    <location>
        <begin position="787"/>
        <end position="799"/>
    </location>
</feature>
<feature type="compositionally biased region" description="Low complexity" evidence="4">
    <location>
        <begin position="1162"/>
        <end position="1178"/>
    </location>
</feature>
<feature type="binding site" evidence="3">
    <location>
        <begin position="178"/>
        <end position="185"/>
    </location>
    <ligand>
        <name>ATP</name>
        <dbReference type="ChEBI" id="CHEBI:30616"/>
    </ligand>
</feature>
<comment type="function">
    <text evidence="1">Regulates cubitus interruptus (ci) processing by recruiting multiple kinases to promote its efficient phosphorylation. Scaffolds multiple kinases and ci into proximity to promote its hyperphosphorylation, which then targets it for SCFSlimb/proteasome-mediated processing to generate its repressor form. Hh signaling inhibits ci phosphorylation by interfering with the cos-ci-kinases complex formation (By similarity).</text>
</comment>
<comment type="subunit">
    <text evidence="1 5">Homodimer (Potential). Binds microtubules. Interacts with ci, smo, sgg, CkIalpha and protein kinase A catalytic subunit (By similarity).</text>
</comment>
<comment type="subcellular location">
    <subcellularLocation>
        <location evidence="1">Cytoplasm</location>
        <location evidence="1">Cytoskeleton</location>
    </subcellularLocation>
</comment>
<comment type="similarity">
    <text evidence="3">Belongs to the TRAFAC class myosin-kinesin ATPase superfamily. Kinesin family. KIF27 subfamily.</text>
</comment>
<dbReference type="EMBL" id="CM000071">
    <property type="protein sequence ID" value="EAL24783.2"/>
    <property type="molecule type" value="Genomic_DNA"/>
</dbReference>
<dbReference type="RefSeq" id="XP_001360209.2">
    <property type="nucleotide sequence ID" value="XM_001360172.3"/>
</dbReference>
<dbReference type="SMR" id="Q292S8"/>
<dbReference type="FunCoup" id="Q292S8">
    <property type="interactions" value="67"/>
</dbReference>
<dbReference type="STRING" id="46245.Q292S8"/>
<dbReference type="EnsemblMetazoa" id="FBtr0278666">
    <property type="protein sequence ID" value="FBpp0277104"/>
    <property type="gene ID" value="FBgn0074342"/>
</dbReference>
<dbReference type="GeneID" id="4803492"/>
<dbReference type="KEGG" id="dpo:4803492"/>
<dbReference type="CTD" id="35653"/>
<dbReference type="eggNOG" id="ENOG502QUYG">
    <property type="taxonomic scope" value="Eukaryota"/>
</dbReference>
<dbReference type="HOGENOM" id="CLU_010897_0_0_1"/>
<dbReference type="InParanoid" id="Q292S8"/>
<dbReference type="OMA" id="YVIMNTF"/>
<dbReference type="Proteomes" id="UP000001819">
    <property type="component" value="Chromosome 3"/>
</dbReference>
<dbReference type="Bgee" id="FBgn0074342">
    <property type="expression patterns" value="Expressed in female reproductive system and 3 other cell types or tissues"/>
</dbReference>
<dbReference type="GO" id="GO:0005737">
    <property type="term" value="C:cytoplasm"/>
    <property type="evidence" value="ECO:0000250"/>
    <property type="project" value="UniProtKB"/>
</dbReference>
<dbReference type="GO" id="GO:0005874">
    <property type="term" value="C:microtubule"/>
    <property type="evidence" value="ECO:0007669"/>
    <property type="project" value="UniProtKB-KW"/>
</dbReference>
<dbReference type="GO" id="GO:0005875">
    <property type="term" value="C:microtubule associated complex"/>
    <property type="evidence" value="ECO:0007669"/>
    <property type="project" value="TreeGrafter"/>
</dbReference>
<dbReference type="GO" id="GO:0005524">
    <property type="term" value="F:ATP binding"/>
    <property type="evidence" value="ECO:0007669"/>
    <property type="project" value="UniProtKB-KW"/>
</dbReference>
<dbReference type="GO" id="GO:0008017">
    <property type="term" value="F:microtubule binding"/>
    <property type="evidence" value="ECO:0000250"/>
    <property type="project" value="UniProtKB"/>
</dbReference>
<dbReference type="GO" id="GO:0003777">
    <property type="term" value="F:microtubule motor activity"/>
    <property type="evidence" value="ECO:0007669"/>
    <property type="project" value="InterPro"/>
</dbReference>
<dbReference type="GO" id="GO:0007018">
    <property type="term" value="P:microtubule-based movement"/>
    <property type="evidence" value="ECO:0007669"/>
    <property type="project" value="InterPro"/>
</dbReference>
<dbReference type="GO" id="GO:0007052">
    <property type="term" value="P:mitotic spindle organization"/>
    <property type="evidence" value="ECO:0007669"/>
    <property type="project" value="TreeGrafter"/>
</dbReference>
<dbReference type="GO" id="GO:0051231">
    <property type="term" value="P:spindle elongation"/>
    <property type="evidence" value="ECO:0007669"/>
    <property type="project" value="TreeGrafter"/>
</dbReference>
<dbReference type="FunFam" id="3.40.850.10:FF:000151">
    <property type="entry name" value="Kinesin-like protein costa"/>
    <property type="match status" value="1"/>
</dbReference>
<dbReference type="Gene3D" id="3.40.850.10">
    <property type="entry name" value="Kinesin motor domain"/>
    <property type="match status" value="2"/>
</dbReference>
<dbReference type="InterPro" id="IPR027640">
    <property type="entry name" value="Kinesin-like_fam"/>
</dbReference>
<dbReference type="InterPro" id="IPR001752">
    <property type="entry name" value="Kinesin_motor_dom"/>
</dbReference>
<dbReference type="InterPro" id="IPR036961">
    <property type="entry name" value="Kinesin_motor_dom_sf"/>
</dbReference>
<dbReference type="InterPro" id="IPR027417">
    <property type="entry name" value="P-loop_NTPase"/>
</dbReference>
<dbReference type="PANTHER" id="PTHR47969">
    <property type="entry name" value="CHROMOSOME-ASSOCIATED KINESIN KIF4A-RELATED"/>
    <property type="match status" value="1"/>
</dbReference>
<dbReference type="PANTHER" id="PTHR47969:SF15">
    <property type="entry name" value="CHROMOSOME-ASSOCIATED KINESIN KIF4A-RELATED"/>
    <property type="match status" value="1"/>
</dbReference>
<dbReference type="Pfam" id="PF00225">
    <property type="entry name" value="Kinesin"/>
    <property type="match status" value="2"/>
</dbReference>
<dbReference type="PRINTS" id="PR00380">
    <property type="entry name" value="KINESINHEAVY"/>
</dbReference>
<dbReference type="SMART" id="SM00129">
    <property type="entry name" value="KISc"/>
    <property type="match status" value="1"/>
</dbReference>
<dbReference type="SUPFAM" id="SSF52540">
    <property type="entry name" value="P-loop containing nucleoside triphosphate hydrolases"/>
    <property type="match status" value="1"/>
</dbReference>
<dbReference type="PROSITE" id="PS50067">
    <property type="entry name" value="KINESIN_MOTOR_2"/>
    <property type="match status" value="1"/>
</dbReference>
<keyword id="KW-0067">ATP-binding</keyword>
<keyword id="KW-0175">Coiled coil</keyword>
<keyword id="KW-0963">Cytoplasm</keyword>
<keyword id="KW-0206">Cytoskeleton</keyword>
<keyword id="KW-0493">Microtubule</keyword>
<keyword id="KW-0505">Motor protein</keyword>
<keyword id="KW-0547">Nucleotide-binding</keyword>
<keyword id="KW-1185">Reference proteome</keyword>
<keyword id="KW-0678">Repressor</keyword>